<gene>
    <name evidence="14" type="primary">CKA1</name>
    <name type="ordered locus">At5g67380</name>
    <name type="ORF">K8K14.10</name>
</gene>
<proteinExistence type="evidence at protein level"/>
<organism>
    <name type="scientific">Arabidopsis thaliana</name>
    <name type="common">Mouse-ear cress</name>
    <dbReference type="NCBI Taxonomy" id="3702"/>
    <lineage>
        <taxon>Eukaryota</taxon>
        <taxon>Viridiplantae</taxon>
        <taxon>Streptophyta</taxon>
        <taxon>Embryophyta</taxon>
        <taxon>Tracheophyta</taxon>
        <taxon>Spermatophyta</taxon>
        <taxon>Magnoliopsida</taxon>
        <taxon>eudicotyledons</taxon>
        <taxon>Gunneridae</taxon>
        <taxon>Pentapetalae</taxon>
        <taxon>rosids</taxon>
        <taxon>malvids</taxon>
        <taxon>Brassicales</taxon>
        <taxon>Brassicaceae</taxon>
        <taxon>Camelineae</taxon>
        <taxon>Arabidopsis</taxon>
    </lineage>
</organism>
<keyword id="KW-0002">3D-structure</keyword>
<keyword id="KW-0025">Alternative splicing</keyword>
<keyword id="KW-0067">ATP-binding</keyword>
<keyword id="KW-0325">Glycoprotein</keyword>
<keyword id="KW-0418">Kinase</keyword>
<keyword id="KW-0547">Nucleotide-binding</keyword>
<keyword id="KW-0539">Nucleus</keyword>
<keyword id="KW-1185">Reference proteome</keyword>
<keyword id="KW-0723">Serine/threonine-protein kinase</keyword>
<keyword id="KW-0732">Signal</keyword>
<keyword id="KW-0808">Transferase</keyword>
<sequence length="409" mass="47640">MIDTLFFLFFLFFDSPLRRLLLLCAVLALRAPTAHSPILRSSIVTPTARAVSEVSGCTTIDPDFLVEISDSNQTRAMSKARVYTEVNVIRPKDYWDYESLIVQWGEQDDYEVVRKVGRGKYSEVFEGINVNSKEKCIIKILKPVKKKKIRREIKILQNLCGGPNIVKLLDVVRDQHSKTPSLIFEYVNSTDFKVLYPTLTDYDIRYYIYELLKALDFCHSQGIMHRDVKPHNVMIDHELRKLRLIDWGLAEFYHPGKEYNVRVASRYFKGPELLVDLQDYDYSLDMWSLGCMFAGMIFRKEPFFYGHDNQDQLVKIAKVLGTDELNAYLNKYQLELDPQLEALVGRHSRKPWSKFINADNQHLVSPEAIDFLDKLLRYDHQDRLTAKEAMAHAYFAQVRAAETSRMRSQ</sequence>
<accession>Q08467</accession>
<accession>B9DH00</accession>
<accession>B9DHA8</accession>
<accession>F4K3Q1</accession>
<accession>Q94F17</accession>
<accession>Q9FN14</accession>
<name>CSK21_ARATH</name>
<feature type="signal peptide" evidence="1">
    <location>
        <begin position="1"/>
        <end position="35"/>
    </location>
</feature>
<feature type="chain" id="PRO_0000417491" description="Casein kinase II subunit alpha-1">
    <location>
        <begin position="36"/>
        <end position="409"/>
    </location>
</feature>
<feature type="domain" description="Protein kinase" evidence="2">
    <location>
        <begin position="110"/>
        <end position="395"/>
    </location>
</feature>
<feature type="active site" description="Proton acceptor" evidence="2 3">
    <location>
        <position position="227"/>
    </location>
</feature>
<feature type="binding site" evidence="2">
    <location>
        <begin position="116"/>
        <end position="124"/>
    </location>
    <ligand>
        <name>ATP</name>
        <dbReference type="ChEBI" id="CHEBI:30616"/>
    </ligand>
</feature>
<feature type="binding site" evidence="2">
    <location>
        <position position="139"/>
    </location>
    <ligand>
        <name>ATP</name>
        <dbReference type="ChEBI" id="CHEBI:30616"/>
    </ligand>
</feature>
<feature type="glycosylation site" description="N-linked (GlcNAc...) asparagine" evidence="1">
    <location>
        <position position="72"/>
    </location>
</feature>
<feature type="glycosylation site" description="N-linked (GlcNAc...) asparagine" evidence="1">
    <location>
        <position position="188"/>
    </location>
</feature>
<feature type="splice variant" id="VSP_043757" description="In isoform 4." evidence="12">
    <location>
        <begin position="1"/>
        <end position="223"/>
    </location>
</feature>
<feature type="splice variant" id="VSP_043758" description="In isoform 3." evidence="14">
    <location>
        <begin position="1"/>
        <end position="76"/>
    </location>
</feature>
<feature type="splice variant" id="VSP_043759" description="In isoform 2." evidence="13">
    <location>
        <begin position="115"/>
        <end position="147"/>
    </location>
</feature>
<feature type="sequence conflict" description="In Ref. 1; BAA01090." evidence="15" ref="1">
    <original>I</original>
    <variation>L</variation>
    <location>
        <position position="223"/>
    </location>
</feature>
<feature type="sequence conflict" description="In Ref. 1; BAA01090." evidence="15" ref="1">
    <original>A</original>
    <variation>V</variation>
    <location>
        <position position="264"/>
    </location>
</feature>
<feature type="sequence conflict" description="In Ref. 1; BAA01090." evidence="15" ref="1">
    <original>MI</original>
    <variation>LL</variation>
    <location>
        <begin position="296"/>
        <end position="297"/>
    </location>
</feature>
<feature type="sequence conflict" description="In Ref. 1; BAA01090." evidence="15" ref="1">
    <original>VL</original>
    <variation>GV</variation>
    <location>
        <begin position="319"/>
        <end position="320"/>
    </location>
</feature>
<feature type="sequence conflict" description="In Ref. 5; BAH20017." evidence="15" ref="5">
    <original>R</original>
    <variation>G</variation>
    <location>
        <position position="349"/>
    </location>
</feature>
<feature type="strand" evidence="17">
    <location>
        <begin position="81"/>
        <end position="83"/>
    </location>
</feature>
<feature type="turn" evidence="18">
    <location>
        <begin position="84"/>
        <end position="88"/>
    </location>
</feature>
<feature type="helix" evidence="16">
    <location>
        <begin position="92"/>
        <end position="95"/>
    </location>
</feature>
<feature type="helix" evidence="17">
    <location>
        <begin position="97"/>
        <end position="99"/>
    </location>
</feature>
<feature type="helix" evidence="18">
    <location>
        <begin position="107"/>
        <end position="109"/>
    </location>
</feature>
<feature type="strand" evidence="18">
    <location>
        <begin position="110"/>
        <end position="118"/>
    </location>
</feature>
<feature type="strand" evidence="18">
    <location>
        <begin position="120"/>
        <end position="129"/>
    </location>
</feature>
<feature type="turn" evidence="18">
    <location>
        <begin position="130"/>
        <end position="132"/>
    </location>
</feature>
<feature type="strand" evidence="18">
    <location>
        <begin position="135"/>
        <end position="141"/>
    </location>
</feature>
<feature type="helix" evidence="18">
    <location>
        <begin position="146"/>
        <end position="159"/>
    </location>
</feature>
<feature type="strand" evidence="18">
    <location>
        <begin position="168"/>
        <end position="173"/>
    </location>
</feature>
<feature type="strand" evidence="18">
    <location>
        <begin position="175"/>
        <end position="177"/>
    </location>
</feature>
<feature type="strand" evidence="18">
    <location>
        <begin position="180"/>
        <end position="185"/>
    </location>
</feature>
<feature type="helix" evidence="18">
    <location>
        <begin position="192"/>
        <end position="195"/>
    </location>
</feature>
<feature type="helix" evidence="18">
    <location>
        <begin position="196"/>
        <end position="198"/>
    </location>
</feature>
<feature type="helix" evidence="18">
    <location>
        <begin position="201"/>
        <end position="220"/>
    </location>
</feature>
<feature type="helix" evidence="18">
    <location>
        <begin position="230"/>
        <end position="232"/>
    </location>
</feature>
<feature type="strand" evidence="18">
    <location>
        <begin position="233"/>
        <end position="236"/>
    </location>
</feature>
<feature type="turn" evidence="18">
    <location>
        <begin position="237"/>
        <end position="240"/>
    </location>
</feature>
<feature type="strand" evidence="18">
    <location>
        <begin position="241"/>
        <end position="244"/>
    </location>
</feature>
<feature type="helix" evidence="18">
    <location>
        <begin position="266"/>
        <end position="268"/>
    </location>
</feature>
<feature type="helix" evidence="18">
    <location>
        <begin position="271"/>
        <end position="274"/>
    </location>
</feature>
<feature type="helix" evidence="18">
    <location>
        <begin position="283"/>
        <end position="298"/>
    </location>
</feature>
<feature type="strand" evidence="18">
    <location>
        <begin position="301"/>
        <end position="304"/>
    </location>
</feature>
<feature type="helix" evidence="18">
    <location>
        <begin position="309"/>
        <end position="320"/>
    </location>
</feature>
<feature type="helix" evidence="18">
    <location>
        <begin position="322"/>
        <end position="331"/>
    </location>
</feature>
<feature type="helix" evidence="18">
    <location>
        <begin position="338"/>
        <end position="344"/>
    </location>
</feature>
<feature type="helix" evidence="18">
    <location>
        <begin position="352"/>
        <end position="355"/>
    </location>
</feature>
<feature type="turn" evidence="18">
    <location>
        <begin position="358"/>
        <end position="360"/>
    </location>
</feature>
<feature type="helix" evidence="18">
    <location>
        <begin position="361"/>
        <end position="363"/>
    </location>
</feature>
<feature type="helix" evidence="18">
    <location>
        <begin position="366"/>
        <end position="375"/>
    </location>
</feature>
<feature type="helix" evidence="18">
    <location>
        <begin position="380"/>
        <end position="382"/>
    </location>
</feature>
<feature type="helix" evidence="18">
    <location>
        <begin position="386"/>
        <end position="390"/>
    </location>
</feature>
<feature type="helix" evidence="18">
    <location>
        <begin position="393"/>
        <end position="395"/>
    </location>
</feature>
<feature type="helix" evidence="18">
    <location>
        <begin position="396"/>
        <end position="409"/>
    </location>
</feature>
<reference key="1">
    <citation type="journal article" date="1993" name="Plant Mol. Biol.">
        <title>Cloning and characterization of two cDNAs encoding casein kinase II catalytic subunits in Arabidopsis thaliana.</title>
        <authorList>
            <person name="Mizoguchi T."/>
            <person name="Yamaguchi-Shinozaki K."/>
            <person name="Hayashida N."/>
            <person name="Kamada H."/>
            <person name="Shinozaki K."/>
        </authorList>
    </citation>
    <scope>NUCLEOTIDE SEQUENCE [MRNA] (ISOFORM 3)</scope>
    <scope>FUNCTION</scope>
    <scope>ACTIVITY REGULATION</scope>
    <scope>TISSUE SPECIFICITY</scope>
    <source>
        <strain>cv. Columbia</strain>
    </source>
</reference>
<reference key="2">
    <citation type="journal article" date="1997" name="DNA Res.">
        <title>Structural analysis of Arabidopsis thaliana chromosome 5. III. Sequence features of the regions of 1,191,918 bp covered by seventeen physically assigned P1 clones.</title>
        <authorList>
            <person name="Nakamura Y."/>
            <person name="Sato S."/>
            <person name="Kaneko T."/>
            <person name="Kotani H."/>
            <person name="Asamizu E."/>
            <person name="Miyajima N."/>
            <person name="Tabata S."/>
        </authorList>
    </citation>
    <scope>NUCLEOTIDE SEQUENCE [LARGE SCALE GENOMIC DNA]</scope>
    <source>
        <strain>cv. Columbia</strain>
    </source>
</reference>
<reference key="3">
    <citation type="journal article" date="2017" name="Plant J.">
        <title>Araport11: a complete reannotation of the Arabidopsis thaliana reference genome.</title>
        <authorList>
            <person name="Cheng C.Y."/>
            <person name="Krishnakumar V."/>
            <person name="Chan A.P."/>
            <person name="Thibaud-Nissen F."/>
            <person name="Schobel S."/>
            <person name="Town C.D."/>
        </authorList>
    </citation>
    <scope>GENOME REANNOTATION</scope>
    <source>
        <strain>cv. Columbia</strain>
    </source>
</reference>
<reference key="4">
    <citation type="journal article" date="2003" name="Science">
        <title>Empirical analysis of transcriptional activity in the Arabidopsis genome.</title>
        <authorList>
            <person name="Yamada K."/>
            <person name="Lim J."/>
            <person name="Dale J.M."/>
            <person name="Chen H."/>
            <person name="Shinn P."/>
            <person name="Palm C.J."/>
            <person name="Southwick A.M."/>
            <person name="Wu H.C."/>
            <person name="Kim C.J."/>
            <person name="Nguyen M."/>
            <person name="Pham P.K."/>
            <person name="Cheuk R.F."/>
            <person name="Karlin-Newmann G."/>
            <person name="Liu S.X."/>
            <person name="Lam B."/>
            <person name="Sakano H."/>
            <person name="Wu T."/>
            <person name="Yu G."/>
            <person name="Miranda M."/>
            <person name="Quach H.L."/>
            <person name="Tripp M."/>
            <person name="Chang C.H."/>
            <person name="Lee J.M."/>
            <person name="Toriumi M.J."/>
            <person name="Chan M.M."/>
            <person name="Tang C.C."/>
            <person name="Onodera C.S."/>
            <person name="Deng J.M."/>
            <person name="Akiyama K."/>
            <person name="Ansari Y."/>
            <person name="Arakawa T."/>
            <person name="Banh J."/>
            <person name="Banno F."/>
            <person name="Bowser L."/>
            <person name="Brooks S.Y."/>
            <person name="Carninci P."/>
            <person name="Chao Q."/>
            <person name="Choy N."/>
            <person name="Enju A."/>
            <person name="Goldsmith A.D."/>
            <person name="Gurjal M."/>
            <person name="Hansen N.F."/>
            <person name="Hayashizaki Y."/>
            <person name="Johnson-Hopson C."/>
            <person name="Hsuan V.W."/>
            <person name="Iida K."/>
            <person name="Karnes M."/>
            <person name="Khan S."/>
            <person name="Koesema E."/>
            <person name="Ishida J."/>
            <person name="Jiang P.X."/>
            <person name="Jones T."/>
            <person name="Kawai J."/>
            <person name="Kamiya A."/>
            <person name="Meyers C."/>
            <person name="Nakajima M."/>
            <person name="Narusaka M."/>
            <person name="Seki M."/>
            <person name="Sakurai T."/>
            <person name="Satou M."/>
            <person name="Tamse R."/>
            <person name="Vaysberg M."/>
            <person name="Wallender E.K."/>
            <person name="Wong C."/>
            <person name="Yamamura Y."/>
            <person name="Yuan S."/>
            <person name="Shinozaki K."/>
            <person name="Davis R.W."/>
            <person name="Theologis A."/>
            <person name="Ecker J.R."/>
        </authorList>
    </citation>
    <scope>NUCLEOTIDE SEQUENCE [LARGE SCALE MRNA] (ISOFORM 4)</scope>
    <source>
        <strain>cv. Columbia</strain>
    </source>
</reference>
<reference key="5">
    <citation type="journal article" date="2009" name="DNA Res.">
        <title>Analysis of multiple occurrences of alternative splicing events in Arabidopsis thaliana using novel sequenced full-length cDNAs.</title>
        <authorList>
            <person name="Iida K."/>
            <person name="Fukami-Kobayashi K."/>
            <person name="Toyoda A."/>
            <person name="Sakaki Y."/>
            <person name="Kobayashi M."/>
            <person name="Seki M."/>
            <person name="Shinozaki K."/>
        </authorList>
    </citation>
    <scope>NUCLEOTIDE SEQUENCE [LARGE SCALE MRNA] (ISOFORMS 1 AND 2)</scope>
    <source>
        <strain>cv. Columbia</strain>
    </source>
</reference>
<reference key="6">
    <citation type="journal article" date="1995" name="Plant Cell">
        <title>Reconstitution of Arabidopsis casein kinase II from recombinant subunits and phosphorylation of transcription factor GBF1.</title>
        <authorList>
            <person name="Klimczak L.J."/>
            <person name="Collinge M.A."/>
            <person name="Farini D."/>
            <person name="Giuliano G."/>
            <person name="Walker J.C."/>
            <person name="Cashmore A.R."/>
        </authorList>
    </citation>
    <scope>FUNCTION</scope>
    <scope>CATALYTIC ACTIVITY</scope>
    <scope>SUBUNIT</scope>
</reference>
<reference key="7">
    <citation type="journal article" date="2006" name="Plant Cell Physiol.">
        <title>An extensive survey of CK2 alpha and beta subunits in Arabidopsis: multiple isoforms exhibit differential subcellular localization.</title>
        <authorList>
            <person name="Salinas P."/>
            <person name="Fuentes D."/>
            <person name="Vidal E."/>
            <person name="Jordana X."/>
            <person name="Echeverria M."/>
            <person name="Holuigue L."/>
        </authorList>
    </citation>
    <scope>SUBCELLULAR LOCATION</scope>
</reference>
<reference key="8">
    <citation type="journal article" date="2009" name="J. Biol. Chem.">
        <title>Differential phosphorylation of plant translation initiation factors by Arabidopsis thaliana CK2 holoenzymes.</title>
        <authorList>
            <person name="Dennis M.D."/>
            <person name="Browning K.S."/>
        </authorList>
    </citation>
    <scope>FUNCTION</scope>
    <scope>SUBUNIT</scope>
</reference>
<reference key="9">
    <citation type="journal article" date="2009" name="J. Biol. Chem.">
        <title>Phosphorylation of plant translation initiation factors by CK2 enhances the in vitro interaction of multifactor complex components.</title>
        <authorList>
            <person name="Dennis M.D."/>
            <person name="Person M.D."/>
            <person name="Browning K.S."/>
        </authorList>
    </citation>
    <scope>FUNCTION</scope>
</reference>
<reference key="10">
    <citation type="journal article" date="2011" name="J. Biol. Chem.">
        <title>Phosphorylation by CK2 enhances the rapid light-induced degradation of phytochrome interacting factor 1 in Arabidopsis.</title>
        <authorList>
            <person name="Bu Q."/>
            <person name="Zhu L."/>
            <person name="Dennis M.D."/>
            <person name="Yu L."/>
            <person name="Lu S.X."/>
            <person name="Person M.D."/>
            <person name="Tobin E.M."/>
            <person name="Browning K.S."/>
            <person name="Huq E."/>
        </authorList>
    </citation>
    <scope>FUNCTION</scope>
</reference>
<reference key="11">
    <citation type="journal article" date="2011" name="Plant Physiol.">
        <title>A role for protein kinase casein kinase2 alpha-subunits in the Arabidopsis circadian clock.</title>
        <authorList>
            <person name="Lu S.X."/>
            <person name="Liu H."/>
            <person name="Knowles S.M."/>
            <person name="Li J."/>
            <person name="Ma L."/>
            <person name="Tobin E.M."/>
            <person name="Lin C."/>
        </authorList>
    </citation>
    <scope>FUNCTION</scope>
    <scope>DISRUPTION PHENOTYPE</scope>
</reference>
<reference key="12">
    <citation type="journal article" date="2012" name="Plant J.">
        <title>CK2-defective Arabidopsis plants exhibit enhanced double-strand break repair rates and reduced survival after exposure to ionizing radiation.</title>
        <authorList>
            <person name="Moreno-Romero J."/>
            <person name="Armengot L."/>
            <person name="Mar Marques-Bueno M."/>
            <person name="Britt A."/>
            <person name="Carmen Martinez M."/>
        </authorList>
    </citation>
    <scope>FUNCTION</scope>
</reference>
<evidence type="ECO:0000255" key="1"/>
<evidence type="ECO:0000255" key="2">
    <source>
        <dbReference type="PROSITE-ProRule" id="PRU00159"/>
    </source>
</evidence>
<evidence type="ECO:0000255" key="3">
    <source>
        <dbReference type="PROSITE-ProRule" id="PRU10027"/>
    </source>
</evidence>
<evidence type="ECO:0000269" key="4">
    <source>
    </source>
</evidence>
<evidence type="ECO:0000269" key="5">
    <source>
    </source>
</evidence>
<evidence type="ECO:0000269" key="6">
    <source>
    </source>
</evidence>
<evidence type="ECO:0000269" key="7">
    <source>
    </source>
</evidence>
<evidence type="ECO:0000269" key="8">
    <source>
    </source>
</evidence>
<evidence type="ECO:0000269" key="9">
    <source>
    </source>
</evidence>
<evidence type="ECO:0000269" key="10">
    <source>
    </source>
</evidence>
<evidence type="ECO:0000269" key="11">
    <source>
    </source>
</evidence>
<evidence type="ECO:0000303" key="12">
    <source>
    </source>
</evidence>
<evidence type="ECO:0000303" key="13">
    <source>
    </source>
</evidence>
<evidence type="ECO:0000303" key="14">
    <source>
    </source>
</evidence>
<evidence type="ECO:0000305" key="15"/>
<evidence type="ECO:0007829" key="16">
    <source>
        <dbReference type="PDB" id="6XX8"/>
    </source>
</evidence>
<evidence type="ECO:0007829" key="17">
    <source>
        <dbReference type="PDB" id="6XX9"/>
    </source>
</evidence>
<evidence type="ECO:0007829" key="18">
    <source>
        <dbReference type="PDB" id="6Z1C"/>
    </source>
</evidence>
<protein>
    <recommendedName>
        <fullName>Casein kinase II subunit alpha-1</fullName>
        <shortName>CK II</shortName>
        <ecNumber evidence="11">2.7.11.1</ecNumber>
    </recommendedName>
    <alternativeName>
        <fullName>Casein kinase alpha 1</fullName>
        <shortName evidence="14">AtCKA1</shortName>
    </alternativeName>
</protein>
<dbReference type="EC" id="2.7.11.1" evidence="11"/>
<dbReference type="EMBL" id="D10246">
    <property type="protein sequence ID" value="BAA01090.1"/>
    <property type="molecule type" value="mRNA"/>
</dbReference>
<dbReference type="EMBL" id="AB007645">
    <property type="protein sequence ID" value="BAB09023.1"/>
    <property type="molecule type" value="Genomic_DNA"/>
</dbReference>
<dbReference type="EMBL" id="CP002688">
    <property type="protein sequence ID" value="AED98334.1"/>
    <property type="molecule type" value="Genomic_DNA"/>
</dbReference>
<dbReference type="EMBL" id="CP002688">
    <property type="protein sequence ID" value="AED98335.1"/>
    <property type="molecule type" value="Genomic_DNA"/>
</dbReference>
<dbReference type="EMBL" id="AF386966">
    <property type="protein sequence ID" value="AAK62411.1"/>
    <property type="molecule type" value="mRNA"/>
</dbReference>
<dbReference type="EMBL" id="BT002141">
    <property type="protein sequence ID" value="AAN72152.1"/>
    <property type="molecule type" value="mRNA"/>
</dbReference>
<dbReference type="EMBL" id="AK317345">
    <property type="protein sequence ID" value="BAH20017.1"/>
    <property type="molecule type" value="mRNA"/>
</dbReference>
<dbReference type="EMBL" id="AK317458">
    <property type="protein sequence ID" value="BAH20125.1"/>
    <property type="molecule type" value="mRNA"/>
</dbReference>
<dbReference type="PIR" id="S31098">
    <property type="entry name" value="S31098"/>
</dbReference>
<dbReference type="RefSeq" id="NP_001032165.1">
    <molecule id="Q08467-2"/>
    <property type="nucleotide sequence ID" value="NM_001037088.2"/>
</dbReference>
<dbReference type="RefSeq" id="NP_201539.2">
    <molecule id="Q08467-1"/>
    <property type="nucleotide sequence ID" value="NM_126138.4"/>
</dbReference>
<dbReference type="PDB" id="6XX6">
    <property type="method" value="X-ray"/>
    <property type="resolution" value="1.85 A"/>
    <property type="chains" value="A=77-409"/>
</dbReference>
<dbReference type="PDB" id="6XX7">
    <property type="method" value="X-ray"/>
    <property type="resolution" value="2.40 A"/>
    <property type="chains" value="A=77-409"/>
</dbReference>
<dbReference type="PDB" id="6XX8">
    <property type="method" value="X-ray"/>
    <property type="resolution" value="1.80 A"/>
    <property type="chains" value="A/B=77-409"/>
</dbReference>
<dbReference type="PDB" id="6XX9">
    <property type="method" value="X-ray"/>
    <property type="resolution" value="1.84 A"/>
    <property type="chains" value="A=77-409"/>
</dbReference>
<dbReference type="PDB" id="6Z1C">
    <property type="method" value="X-ray"/>
    <property type="resolution" value="1.75 A"/>
    <property type="chains" value="A=78-409"/>
</dbReference>
<dbReference type="PDBsum" id="6XX6"/>
<dbReference type="PDBsum" id="6XX7"/>
<dbReference type="PDBsum" id="6XX8"/>
<dbReference type="PDBsum" id="6XX9"/>
<dbReference type="PDBsum" id="6Z1C"/>
<dbReference type="SMR" id="Q08467"/>
<dbReference type="BioGRID" id="22115">
    <property type="interactions" value="28"/>
</dbReference>
<dbReference type="FunCoup" id="Q08467">
    <property type="interactions" value="4738"/>
</dbReference>
<dbReference type="IntAct" id="Q08467">
    <property type="interactions" value="11"/>
</dbReference>
<dbReference type="STRING" id="3702.Q08467"/>
<dbReference type="GlyCosmos" id="Q08467">
    <property type="glycosylation" value="2 sites, No reported glycans"/>
</dbReference>
<dbReference type="GlyGen" id="Q08467">
    <property type="glycosylation" value="2 sites"/>
</dbReference>
<dbReference type="PaxDb" id="3702-AT5G67380.1"/>
<dbReference type="ProteomicsDB" id="224419">
    <molecule id="Q08467-1"/>
</dbReference>
<dbReference type="EnsemblPlants" id="AT5G67380.1">
    <molecule id="Q08467-1"/>
    <property type="protein sequence ID" value="AT5G67380.1"/>
    <property type="gene ID" value="AT5G67380"/>
</dbReference>
<dbReference type="EnsemblPlants" id="AT5G67380.2">
    <molecule id="Q08467-2"/>
    <property type="protein sequence ID" value="AT5G67380.2"/>
    <property type="gene ID" value="AT5G67380"/>
</dbReference>
<dbReference type="GeneID" id="836873"/>
<dbReference type="Gramene" id="AT5G67380.1">
    <molecule id="Q08467-1"/>
    <property type="protein sequence ID" value="AT5G67380.1"/>
    <property type="gene ID" value="AT5G67380"/>
</dbReference>
<dbReference type="Gramene" id="AT5G67380.2">
    <molecule id="Q08467-2"/>
    <property type="protein sequence ID" value="AT5G67380.2"/>
    <property type="gene ID" value="AT5G67380"/>
</dbReference>
<dbReference type="KEGG" id="ath:AT5G67380"/>
<dbReference type="Araport" id="AT5G67380"/>
<dbReference type="TAIR" id="AT5G67380">
    <property type="gene designation" value="CKA1"/>
</dbReference>
<dbReference type="eggNOG" id="KOG0668">
    <property type="taxonomic scope" value="Eukaryota"/>
</dbReference>
<dbReference type="HOGENOM" id="CLU_000288_70_4_1"/>
<dbReference type="InParanoid" id="Q08467"/>
<dbReference type="OMA" id="FEGFKMS"/>
<dbReference type="BRENDA" id="2.7.11.1">
    <property type="organism ID" value="399"/>
</dbReference>
<dbReference type="CD-CODE" id="4299E36E">
    <property type="entry name" value="Nucleolus"/>
</dbReference>
<dbReference type="PRO" id="PR:Q08467"/>
<dbReference type="Proteomes" id="UP000006548">
    <property type="component" value="Chromosome 5"/>
</dbReference>
<dbReference type="ExpressionAtlas" id="Q08467">
    <property type="expression patterns" value="baseline and differential"/>
</dbReference>
<dbReference type="GO" id="GO:0005730">
    <property type="term" value="C:nucleolus"/>
    <property type="evidence" value="ECO:0000314"/>
    <property type="project" value="UniProtKB"/>
</dbReference>
<dbReference type="GO" id="GO:0005634">
    <property type="term" value="C:nucleus"/>
    <property type="evidence" value="ECO:0000314"/>
    <property type="project" value="UniProtKB"/>
</dbReference>
<dbReference type="GO" id="GO:0005956">
    <property type="term" value="C:protein kinase CK2 complex"/>
    <property type="evidence" value="ECO:0000314"/>
    <property type="project" value="UniProtKB"/>
</dbReference>
<dbReference type="GO" id="GO:0005524">
    <property type="term" value="F:ATP binding"/>
    <property type="evidence" value="ECO:0007669"/>
    <property type="project" value="UniProtKB-KW"/>
</dbReference>
<dbReference type="GO" id="GO:0016301">
    <property type="term" value="F:kinase activity"/>
    <property type="evidence" value="ECO:0000314"/>
    <property type="project" value="UniProtKB"/>
</dbReference>
<dbReference type="GO" id="GO:0106310">
    <property type="term" value="F:protein serine kinase activity"/>
    <property type="evidence" value="ECO:0007669"/>
    <property type="project" value="RHEA"/>
</dbReference>
<dbReference type="GO" id="GO:0004674">
    <property type="term" value="F:protein serine/threonine kinase activity"/>
    <property type="evidence" value="ECO:0007669"/>
    <property type="project" value="UniProtKB-KW"/>
</dbReference>
<dbReference type="GO" id="GO:0042752">
    <property type="term" value="P:regulation of circadian rhythm"/>
    <property type="evidence" value="ECO:0000315"/>
    <property type="project" value="UniProtKB"/>
</dbReference>
<dbReference type="CDD" id="cd14132">
    <property type="entry name" value="STKc_CK2_alpha"/>
    <property type="match status" value="1"/>
</dbReference>
<dbReference type="FunFam" id="1.10.510.10:FF:000059">
    <property type="entry name" value="Casein kinase II subunit alpha"/>
    <property type="match status" value="1"/>
</dbReference>
<dbReference type="FunFam" id="3.30.200.20:FF:000088">
    <property type="entry name" value="Casein kinase II subunit alpha"/>
    <property type="match status" value="1"/>
</dbReference>
<dbReference type="Gene3D" id="3.30.200.20">
    <property type="entry name" value="Phosphorylase Kinase, domain 1"/>
    <property type="match status" value="1"/>
</dbReference>
<dbReference type="Gene3D" id="1.10.510.10">
    <property type="entry name" value="Transferase(Phosphotransferase) domain 1"/>
    <property type="match status" value="1"/>
</dbReference>
<dbReference type="InterPro" id="IPR045216">
    <property type="entry name" value="CK2_alpha"/>
</dbReference>
<dbReference type="InterPro" id="IPR011009">
    <property type="entry name" value="Kinase-like_dom_sf"/>
</dbReference>
<dbReference type="InterPro" id="IPR000719">
    <property type="entry name" value="Prot_kinase_dom"/>
</dbReference>
<dbReference type="InterPro" id="IPR017441">
    <property type="entry name" value="Protein_kinase_ATP_BS"/>
</dbReference>
<dbReference type="InterPro" id="IPR008271">
    <property type="entry name" value="Ser/Thr_kinase_AS"/>
</dbReference>
<dbReference type="PANTHER" id="PTHR24054">
    <property type="entry name" value="CASEIN KINASE II SUBUNIT ALPHA"/>
    <property type="match status" value="1"/>
</dbReference>
<dbReference type="PANTHER" id="PTHR24054:SF56">
    <property type="entry name" value="CASEIN KINASE II SUBUNIT ALPHA-1"/>
    <property type="match status" value="1"/>
</dbReference>
<dbReference type="Pfam" id="PF00069">
    <property type="entry name" value="Pkinase"/>
    <property type="match status" value="1"/>
</dbReference>
<dbReference type="SMART" id="SM00220">
    <property type="entry name" value="S_TKc"/>
    <property type="match status" value="1"/>
</dbReference>
<dbReference type="SUPFAM" id="SSF56112">
    <property type="entry name" value="Protein kinase-like (PK-like)"/>
    <property type="match status" value="1"/>
</dbReference>
<dbReference type="PROSITE" id="PS00107">
    <property type="entry name" value="PROTEIN_KINASE_ATP"/>
    <property type="match status" value="1"/>
</dbReference>
<dbReference type="PROSITE" id="PS50011">
    <property type="entry name" value="PROTEIN_KINASE_DOM"/>
    <property type="match status" value="1"/>
</dbReference>
<dbReference type="PROSITE" id="PS00108">
    <property type="entry name" value="PROTEIN_KINASE_ST"/>
    <property type="match status" value="1"/>
</dbReference>
<comment type="function">
    <text evidence="5 6 7 8 9 10 11">Casein kinases are operationally defined by their preferential utilization of acidic proteins such as caseins as substrates. Phosphorylates casein in vitro (PubMed:7678767). The alpha chain contains the catalytic site. The tetrameric holoenzyme CK2, composed of two alpha and two beta subunits, phosphorylates the transcription factor GBFl, resulting in stimulation of its DNA binding activity (PubMed:7696877). CK2 phosphorylates the transcription factor PIF1 after an exposure to light, resulting in a proteasome-dependent degradation of PIF1 and promotion of photomorphogenesis (PubMed:21330376). CK2 phosphorylates translation initiation factors. May participate in the regulation of the initiation of translation (PubMed:19509278, PubMed:19509420). Acts as a circadian clock component that maintains the correct period length through phosphorylation of CCA1 (PubMed:21900482). Required for the maintenance and control of genomic stability and chromatin structure (PubMed:22487192). May act as an ectokinase that phosphorylates several extracellular proteins.</text>
</comment>
<comment type="catalytic activity">
    <reaction evidence="11">
        <text>L-seryl-[protein] + ATP = O-phospho-L-seryl-[protein] + ADP + H(+)</text>
        <dbReference type="Rhea" id="RHEA:17989"/>
        <dbReference type="Rhea" id="RHEA-COMP:9863"/>
        <dbReference type="Rhea" id="RHEA-COMP:11604"/>
        <dbReference type="ChEBI" id="CHEBI:15378"/>
        <dbReference type="ChEBI" id="CHEBI:29999"/>
        <dbReference type="ChEBI" id="CHEBI:30616"/>
        <dbReference type="ChEBI" id="CHEBI:83421"/>
        <dbReference type="ChEBI" id="CHEBI:456216"/>
        <dbReference type="EC" id="2.7.11.1"/>
    </reaction>
</comment>
<comment type="catalytic activity">
    <reaction evidence="11">
        <text>L-threonyl-[protein] + ATP = O-phospho-L-threonyl-[protein] + ADP + H(+)</text>
        <dbReference type="Rhea" id="RHEA:46608"/>
        <dbReference type="Rhea" id="RHEA-COMP:11060"/>
        <dbReference type="Rhea" id="RHEA-COMP:11605"/>
        <dbReference type="ChEBI" id="CHEBI:15378"/>
        <dbReference type="ChEBI" id="CHEBI:30013"/>
        <dbReference type="ChEBI" id="CHEBI:30616"/>
        <dbReference type="ChEBI" id="CHEBI:61977"/>
        <dbReference type="ChEBI" id="CHEBI:456216"/>
        <dbReference type="EC" id="2.7.11.1"/>
    </reaction>
</comment>
<comment type="activity regulation">
    <text evidence="10">Inhibited by heparin.</text>
</comment>
<comment type="subunit">
    <text evidence="5 11">Heterotetramer of two catalytic alpha subunits and two regulatory beta subunits.</text>
</comment>
<comment type="interaction">
    <interactant intactId="EBI-1644972">
        <id>Q08467</id>
    </interactant>
    <interactant intactId="EBI-1644880">
        <id>P92973</id>
        <label>CCA1</label>
    </interactant>
    <organismsDiffer>false</organismsDiffer>
    <experiments>4</experiments>
</comment>
<comment type="subcellular location">
    <subcellularLocation>
        <location evidence="4">Nucleus</location>
    </subcellularLocation>
    <subcellularLocation>
        <location evidence="4">Nucleus</location>
        <location evidence="4">Nucleolus</location>
    </subcellularLocation>
    <text evidence="4">Enriched in the nucleolus.</text>
</comment>
<comment type="alternative products">
    <event type="alternative splicing"/>
    <isoform>
        <id>Q08467-1</id>
        <name>1</name>
        <sequence type="displayed"/>
    </isoform>
    <isoform>
        <id>Q08467-2</id>
        <name>2</name>
        <sequence type="described" ref="VSP_043759"/>
    </isoform>
    <isoform>
        <id>Q08467-3</id>
        <name>3</name>
        <sequence type="described" ref="VSP_043758"/>
    </isoform>
    <isoform>
        <id>Q08467-4</id>
        <name>4</name>
        <sequence type="described" ref="VSP_043757"/>
    </isoform>
</comment>
<comment type="tissue specificity">
    <text evidence="10">Seems to be present in all plant organs. But seems to be less expressed than CKA2.</text>
</comment>
<comment type="disruption phenotype">
    <text evidence="8">No visible phenotype under normal growth conditions, but the triple mutant cka1, cka2 and cka3 show altered circadian rhythms and delayed flowering under long day conditions.</text>
</comment>
<comment type="similarity">
    <text evidence="2">Belongs to the protein kinase superfamily. Ser/Thr protein kinase family. CK2 subfamily.</text>
</comment>